<name>TRI26_PANTR</name>
<feature type="chain" id="PRO_0000056237" description="Tripartite motif-containing protein 26">
    <location>
        <begin position="1"/>
        <end position="539"/>
    </location>
</feature>
<feature type="domain" description="B30.2/SPRY" evidence="6">
    <location>
        <begin position="295"/>
        <end position="539"/>
    </location>
</feature>
<feature type="zinc finger region" description="RING-type" evidence="5">
    <location>
        <begin position="16"/>
        <end position="57"/>
    </location>
</feature>
<feature type="zinc finger region" description="B box-type" evidence="4">
    <location>
        <begin position="97"/>
        <end position="138"/>
    </location>
</feature>
<feature type="region of interest" description="Disordered" evidence="7">
    <location>
        <begin position="376"/>
        <end position="437"/>
    </location>
</feature>
<feature type="coiled-coil region" evidence="3">
    <location>
        <begin position="188"/>
        <end position="227"/>
    </location>
</feature>
<feature type="compositionally biased region" description="Acidic residues" evidence="7">
    <location>
        <begin position="380"/>
        <end position="434"/>
    </location>
</feature>
<feature type="binding site" evidence="4">
    <location>
        <position position="102"/>
    </location>
    <ligand>
        <name>Zn(2+)</name>
        <dbReference type="ChEBI" id="CHEBI:29105"/>
    </ligand>
</feature>
<feature type="binding site" evidence="4">
    <location>
        <position position="105"/>
    </location>
    <ligand>
        <name>Zn(2+)</name>
        <dbReference type="ChEBI" id="CHEBI:29105"/>
    </ligand>
</feature>
<feature type="binding site" evidence="4">
    <location>
        <position position="124"/>
    </location>
    <ligand>
        <name>Zn(2+)</name>
        <dbReference type="ChEBI" id="CHEBI:29105"/>
    </ligand>
</feature>
<feature type="binding site" evidence="4">
    <location>
        <position position="130"/>
    </location>
    <ligand>
        <name>Zn(2+)</name>
        <dbReference type="ChEBI" id="CHEBI:29105"/>
    </ligand>
</feature>
<accession>Q7YR34</accession>
<accession>Q1XHU4</accession>
<organism>
    <name type="scientific">Pan troglodytes</name>
    <name type="common">Chimpanzee</name>
    <dbReference type="NCBI Taxonomy" id="9598"/>
    <lineage>
        <taxon>Eukaryota</taxon>
        <taxon>Metazoa</taxon>
        <taxon>Chordata</taxon>
        <taxon>Craniata</taxon>
        <taxon>Vertebrata</taxon>
        <taxon>Euteleostomi</taxon>
        <taxon>Mammalia</taxon>
        <taxon>Eutheria</taxon>
        <taxon>Euarchontoglires</taxon>
        <taxon>Primates</taxon>
        <taxon>Haplorrhini</taxon>
        <taxon>Catarrhini</taxon>
        <taxon>Hominidae</taxon>
        <taxon>Pan</taxon>
    </lineage>
</organism>
<keyword id="KW-0175">Coiled coil</keyword>
<keyword id="KW-0963">Cytoplasm</keyword>
<keyword id="KW-0391">Immunity</keyword>
<keyword id="KW-0399">Innate immunity</keyword>
<keyword id="KW-0479">Metal-binding</keyword>
<keyword id="KW-0539">Nucleus</keyword>
<keyword id="KW-1185">Reference proteome</keyword>
<keyword id="KW-0808">Transferase</keyword>
<keyword id="KW-0832">Ubl conjugation</keyword>
<keyword id="KW-0862">Zinc</keyword>
<keyword id="KW-0863">Zinc-finger</keyword>
<protein>
    <recommendedName>
        <fullName>Tripartite motif-containing protein 26</fullName>
        <ecNumber evidence="1">2.3.2.27</ecNumber>
    </recommendedName>
    <alternativeName>
        <fullName>Zinc finger protein 173</fullName>
    </alternativeName>
</protein>
<gene>
    <name type="primary">TRIM26</name>
    <name type="synonym">ZNF173</name>
</gene>
<proteinExistence type="inferred from homology"/>
<dbReference type="EC" id="2.3.2.27" evidence="1"/>
<dbReference type="EMBL" id="BA000041">
    <property type="protein sequence ID" value="BAC78183.1"/>
    <property type="molecule type" value="Genomic_DNA"/>
</dbReference>
<dbReference type="EMBL" id="AB210203">
    <property type="protein sequence ID" value="BAE92825.1"/>
    <property type="molecule type" value="Genomic_DNA"/>
</dbReference>
<dbReference type="EMBL" id="AB210204">
    <property type="protein sequence ID" value="BAE92826.1"/>
    <property type="molecule type" value="Genomic_DNA"/>
</dbReference>
<dbReference type="RefSeq" id="NP_001037841.1">
    <property type="nucleotide sequence ID" value="NM_001044376.1"/>
</dbReference>
<dbReference type="RefSeq" id="XP_009449080.1">
    <property type="nucleotide sequence ID" value="XM_009450805.4"/>
</dbReference>
<dbReference type="RefSeq" id="XP_009449081.1">
    <property type="nucleotide sequence ID" value="XM_009450806.5"/>
</dbReference>
<dbReference type="RefSeq" id="XP_009449082.1">
    <property type="nucleotide sequence ID" value="XM_009450807.4"/>
</dbReference>
<dbReference type="RefSeq" id="XP_009449085.1">
    <property type="nucleotide sequence ID" value="XM_009450810.4"/>
</dbReference>
<dbReference type="SMR" id="Q7YR34"/>
<dbReference type="FunCoup" id="Q7YR34">
    <property type="interactions" value="129"/>
</dbReference>
<dbReference type="STRING" id="9598.ENSPTRP00000039843"/>
<dbReference type="PaxDb" id="9598-ENSPTRP00000039843"/>
<dbReference type="Ensembl" id="ENSPTRT00000048788.3">
    <property type="protein sequence ID" value="ENSPTRP00000039843.2"/>
    <property type="gene ID" value="ENSPTRG00000024332.6"/>
</dbReference>
<dbReference type="GeneID" id="462536"/>
<dbReference type="KEGG" id="ptr:462536"/>
<dbReference type="CTD" id="7726"/>
<dbReference type="VGNC" id="VGNC:12729">
    <property type="gene designation" value="TRIM26"/>
</dbReference>
<dbReference type="eggNOG" id="KOG2177">
    <property type="taxonomic scope" value="Eukaryota"/>
</dbReference>
<dbReference type="GeneTree" id="ENSGT00940000158668"/>
<dbReference type="HOGENOM" id="CLU_013137_0_3_1"/>
<dbReference type="InParanoid" id="Q7YR34"/>
<dbReference type="OMA" id="PFFWLNW"/>
<dbReference type="OrthoDB" id="11891at9604"/>
<dbReference type="TreeFam" id="TF342569"/>
<dbReference type="Proteomes" id="UP000002277">
    <property type="component" value="Chromosome 6"/>
</dbReference>
<dbReference type="Bgee" id="ENSPTRG00000024332">
    <property type="expression patterns" value="Expressed in lung and 21 other cell types or tissues"/>
</dbReference>
<dbReference type="GO" id="GO:0005737">
    <property type="term" value="C:cytoplasm"/>
    <property type="evidence" value="ECO:0000318"/>
    <property type="project" value="GO_Central"/>
</dbReference>
<dbReference type="GO" id="GO:0005634">
    <property type="term" value="C:nucleus"/>
    <property type="evidence" value="ECO:0007669"/>
    <property type="project" value="UniProtKB-SubCell"/>
</dbReference>
<dbReference type="GO" id="GO:0061630">
    <property type="term" value="F:ubiquitin protein ligase activity"/>
    <property type="evidence" value="ECO:0000318"/>
    <property type="project" value="GO_Central"/>
</dbReference>
<dbReference type="GO" id="GO:0008270">
    <property type="term" value="F:zinc ion binding"/>
    <property type="evidence" value="ECO:0007669"/>
    <property type="project" value="UniProtKB-KW"/>
</dbReference>
<dbReference type="GO" id="GO:0046597">
    <property type="term" value="P:host-mediated suppression of symbiont invasion"/>
    <property type="evidence" value="ECO:0000318"/>
    <property type="project" value="GO_Central"/>
</dbReference>
<dbReference type="GO" id="GO:0045087">
    <property type="term" value="P:innate immune response"/>
    <property type="evidence" value="ECO:0000318"/>
    <property type="project" value="GO_Central"/>
</dbReference>
<dbReference type="GO" id="GO:1901224">
    <property type="term" value="P:positive regulation of non-canonical NF-kappaB signal transduction"/>
    <property type="evidence" value="ECO:0007669"/>
    <property type="project" value="Ensembl"/>
</dbReference>
<dbReference type="GO" id="GO:0043161">
    <property type="term" value="P:proteasome-mediated ubiquitin-dependent protein catabolic process"/>
    <property type="evidence" value="ECO:0007669"/>
    <property type="project" value="Ensembl"/>
</dbReference>
<dbReference type="GO" id="GO:0070979">
    <property type="term" value="P:protein K11-linked ubiquitination"/>
    <property type="evidence" value="ECO:0007669"/>
    <property type="project" value="Ensembl"/>
</dbReference>
<dbReference type="GO" id="GO:0044790">
    <property type="term" value="P:suppression of viral release by host"/>
    <property type="evidence" value="ECO:0007669"/>
    <property type="project" value="Ensembl"/>
</dbReference>
<dbReference type="CDD" id="cd19765">
    <property type="entry name" value="Bbox2_TRIM10-like"/>
    <property type="match status" value="1"/>
</dbReference>
<dbReference type="CDD" id="cd16598">
    <property type="entry name" value="RING-HC_TRIM26_C-IV"/>
    <property type="match status" value="1"/>
</dbReference>
<dbReference type="CDD" id="cd15826">
    <property type="entry name" value="SPRY_PRY_TRIM15"/>
    <property type="match status" value="1"/>
</dbReference>
<dbReference type="FunFam" id="2.60.120.920:FF:000032">
    <property type="entry name" value="Tripartite motif-containing protein 26"/>
    <property type="match status" value="1"/>
</dbReference>
<dbReference type="FunFam" id="2.60.120.920:FF:000039">
    <property type="entry name" value="Tripartite motif-containing protein 26"/>
    <property type="match status" value="1"/>
</dbReference>
<dbReference type="FunFam" id="3.30.160.60:FF:001212">
    <property type="entry name" value="Tripartite motif-containing protein 26"/>
    <property type="match status" value="1"/>
</dbReference>
<dbReference type="FunFam" id="3.30.40.10:FF:000361">
    <property type="entry name" value="Tripartite motif-containing protein 26"/>
    <property type="match status" value="1"/>
</dbReference>
<dbReference type="Gene3D" id="2.60.120.920">
    <property type="match status" value="2"/>
</dbReference>
<dbReference type="Gene3D" id="3.30.160.60">
    <property type="entry name" value="Classic Zinc Finger"/>
    <property type="match status" value="1"/>
</dbReference>
<dbReference type="Gene3D" id="3.30.40.10">
    <property type="entry name" value="Zinc/RING finger domain, C3HC4 (zinc finger)"/>
    <property type="match status" value="1"/>
</dbReference>
<dbReference type="InterPro" id="IPR001870">
    <property type="entry name" value="B30.2/SPRY"/>
</dbReference>
<dbReference type="InterPro" id="IPR043136">
    <property type="entry name" value="B30.2/SPRY_sf"/>
</dbReference>
<dbReference type="InterPro" id="IPR003879">
    <property type="entry name" value="Butyrophylin_SPRY"/>
</dbReference>
<dbReference type="InterPro" id="IPR013320">
    <property type="entry name" value="ConA-like_dom_sf"/>
</dbReference>
<dbReference type="InterPro" id="IPR006574">
    <property type="entry name" value="PRY"/>
</dbReference>
<dbReference type="InterPro" id="IPR003877">
    <property type="entry name" value="SPRY_dom"/>
</dbReference>
<dbReference type="InterPro" id="IPR050143">
    <property type="entry name" value="TRIM/RBCC"/>
</dbReference>
<dbReference type="InterPro" id="IPR000315">
    <property type="entry name" value="Znf_B-box"/>
</dbReference>
<dbReference type="InterPro" id="IPR001841">
    <property type="entry name" value="Znf_RING"/>
</dbReference>
<dbReference type="InterPro" id="IPR013083">
    <property type="entry name" value="Znf_RING/FYVE/PHD"/>
</dbReference>
<dbReference type="PANTHER" id="PTHR24103">
    <property type="entry name" value="E3 UBIQUITIN-PROTEIN LIGASE TRIM"/>
    <property type="match status" value="1"/>
</dbReference>
<dbReference type="Pfam" id="PF13765">
    <property type="entry name" value="PRY"/>
    <property type="match status" value="1"/>
</dbReference>
<dbReference type="Pfam" id="PF00622">
    <property type="entry name" value="SPRY"/>
    <property type="match status" value="1"/>
</dbReference>
<dbReference type="Pfam" id="PF00643">
    <property type="entry name" value="zf-B_box"/>
    <property type="match status" value="1"/>
</dbReference>
<dbReference type="Pfam" id="PF15227">
    <property type="entry name" value="zf-C3HC4_4"/>
    <property type="match status" value="1"/>
</dbReference>
<dbReference type="PRINTS" id="PR01407">
    <property type="entry name" value="BUTYPHLNCDUF"/>
</dbReference>
<dbReference type="SMART" id="SM00336">
    <property type="entry name" value="BBOX"/>
    <property type="match status" value="1"/>
</dbReference>
<dbReference type="SMART" id="SM00589">
    <property type="entry name" value="PRY"/>
    <property type="match status" value="1"/>
</dbReference>
<dbReference type="SMART" id="SM00184">
    <property type="entry name" value="RING"/>
    <property type="match status" value="1"/>
</dbReference>
<dbReference type="SMART" id="SM00449">
    <property type="entry name" value="SPRY"/>
    <property type="match status" value="1"/>
</dbReference>
<dbReference type="SUPFAM" id="SSF57845">
    <property type="entry name" value="B-box zinc-binding domain"/>
    <property type="match status" value="1"/>
</dbReference>
<dbReference type="SUPFAM" id="SSF49899">
    <property type="entry name" value="Concanavalin A-like lectins/glucanases"/>
    <property type="match status" value="2"/>
</dbReference>
<dbReference type="SUPFAM" id="SSF57850">
    <property type="entry name" value="RING/U-box"/>
    <property type="match status" value="1"/>
</dbReference>
<dbReference type="PROSITE" id="PS50188">
    <property type="entry name" value="B302_SPRY"/>
    <property type="match status" value="1"/>
</dbReference>
<dbReference type="PROSITE" id="PS50119">
    <property type="entry name" value="ZF_BBOX"/>
    <property type="match status" value="1"/>
</dbReference>
<dbReference type="PROSITE" id="PS50089">
    <property type="entry name" value="ZF_RING_2"/>
    <property type="match status" value="1"/>
</dbReference>
<reference key="1">
    <citation type="journal article" date="2003" name="Proc. Natl. Acad. Sci. U.S.A.">
        <title>Comparative sequencing of human and chimpanzee MHC class I regions unveils insertions/deletions as the major path to genomic divergence.</title>
        <authorList>
            <person name="Anzai T."/>
            <person name="Shiina T."/>
            <person name="Kimura N."/>
            <person name="Yanagiya K."/>
            <person name="Kohara S."/>
            <person name="Shigenari A."/>
            <person name="Yamagata T."/>
            <person name="Kulski J.K."/>
            <person name="Naruse T.K."/>
            <person name="Fujimori Y."/>
            <person name="Fukuzumi Y."/>
            <person name="Yamazaki M."/>
            <person name="Tashiro H."/>
            <person name="Iwamoto C."/>
            <person name="Umehara Y."/>
            <person name="Imanishi T."/>
            <person name="Meyer A."/>
            <person name="Ikeo K."/>
            <person name="Gojobori T."/>
            <person name="Bahram S."/>
            <person name="Inoko H."/>
        </authorList>
    </citation>
    <scope>NUCLEOTIDE SEQUENCE [LARGE SCALE GENOMIC DNA]</scope>
</reference>
<reference key="2">
    <citation type="journal article" date="2006" name="Genetics">
        <title>Rapid evolution of major histocompatibility complex class I genes in primates generates new disease alleles in humans via hitchhiking diversity.</title>
        <authorList>
            <person name="Shiina T."/>
            <person name="Ota M."/>
            <person name="Shimizu S."/>
            <person name="Katsuyama Y."/>
            <person name="Hashimoto N."/>
            <person name="Takasu M."/>
            <person name="Anzai T."/>
            <person name="Kulski J.K."/>
            <person name="Kikkawa E."/>
            <person name="Naruse T."/>
            <person name="Kimura N."/>
            <person name="Yanagiya K."/>
            <person name="Watanabe A."/>
            <person name="Hosomichi K."/>
            <person name="Kohara S."/>
            <person name="Iwamoto C."/>
            <person name="Umehara Y."/>
            <person name="Meyer A."/>
            <person name="Wanner V."/>
            <person name="Sano K."/>
            <person name="Macquin C."/>
            <person name="Ikeo K."/>
            <person name="Tokunaga K."/>
            <person name="Gojobori T."/>
            <person name="Inoko H."/>
            <person name="Bahram S."/>
        </authorList>
    </citation>
    <scope>NUCLEOTIDE SEQUENCE [LARGE SCALE GENOMIC DNA]</scope>
</reference>
<sequence length="539" mass="62198">MATSAPLRSLEEEVTCSICLDYLRDPVTIDCGHVFCRSCTTDVRPISGSRPVCPLCKKPFKKENIRPVWQLASLVENIERLKVDKGRQPGEVTREQQDAKLCERHREKLHYYCEDDGKLLCVMCRESREHRPHTAVLMEKAAQPHREKILNHLSTLRRDRDKIQGFQAKGEADILAALKKLQDQRQYIVAEFEQGHQFLREREEHLLEQLAKLEQELTEGREKFKSRGVGELARLALVISELEGKAQQPAAELMQDTRDFLNRYPRKKFWVGKPIARVVKKKTGEFSDKLLSLQRGLREFQGKLLRDLEYKTVSVTLDPQSASGYLQLSEDWKCVTYTSLYKSAYLHPQQFDCEPGVLGSKGFTWGKVYWEVEVEREGWSEDEEEGDEEEEGEEEEEEEEAGYGDGYDDWETDEDEESLGDEEEEEEEEEEEVLESCMVGVARDSMKRKGDLSLRPEDGVWALRLSSSGIWANTSPEAELFPALRPRRVGIALDYEGGTVTFTNAESQELIYTFTATFTRRLVPFLWLKWPGTRLLLRP</sequence>
<comment type="function">
    <text evidence="1 2">E3 ubiquitin-protein ligase which regulates the IFN-beta production and antiviral response downstream of various DNA-encoded pattern-recognition receptors (PRRs). Also plays a central role in determining the response to different forms of oxidative stress by controlling levels of DNA glycosylases NEIL1, NEIL3 and NTH1 that are involved in repair of damaged DNA. Promotes nuclear IRF3 ubiquitination and proteasomal degradation. Bridges together TBK1 and NEMO during the innate response to viral infection leading to the activation of TBK1. Positively regulates LPS-mediated inflammatory innate immune response by catalyzing the 'Lys-11'-linked polyubiquitination of TAB1 to enhance its activation and subsequent NF-kappa-B and MAPK signaling. In a manner independent of its catalytic activity, inhibits WWP2, a SOX2-directed E3 ubiquitin ligase, and thus protects SOX2 from polyubiquitination and proteasomal degradation. Ubiquitinates the histone acetyltransferase protein complex component PHF20 and thereby triggers its degradation in the nucleus after its recruitment by the histone demethylase KDM6B, serving as a scaffold protein. Upon induction by TGF-beta, ubiquitinates the TFIID component TAF7 for proteasomal degradation (By similarity). Induces ferroptosis by ubiquitinating SLC7A11, a critical protein for lipid reactive oxygen species (ROS) scavenging (By similarity).</text>
</comment>
<comment type="catalytic activity">
    <reaction evidence="1">
        <text>S-ubiquitinyl-[E2 ubiquitin-conjugating enzyme]-L-cysteine + [acceptor protein]-L-lysine = [E2 ubiquitin-conjugating enzyme]-L-cysteine + N(6)-ubiquitinyl-[acceptor protein]-L-lysine.</text>
        <dbReference type="EC" id="2.3.2.27"/>
    </reaction>
</comment>
<comment type="subunit">
    <text evidence="1">Interacts with TBK1; this interaction bridges together TBK1 and NEMO in order to activate TBK1. Interacts with INCA1.</text>
</comment>
<comment type="subcellular location">
    <subcellularLocation>
        <location evidence="1">Cytoplasm</location>
    </subcellularLocation>
    <subcellularLocation>
        <location evidence="1">Nucleus</location>
    </subcellularLocation>
    <text evidence="1">Viral infection mediates TRIM26 nuclear translocation.</text>
</comment>
<comment type="PTM">
    <text evidence="1">Autoubiquitinates upon viral infection. In turn, autoubiquitinated TRIM26 recruits NEMO and bridges TBK1-NEMO interaction.</text>
</comment>
<comment type="similarity">
    <text evidence="8">Belongs to the TRIM/RBCC family.</text>
</comment>
<evidence type="ECO:0000250" key="1">
    <source>
        <dbReference type="UniProtKB" id="Q12899"/>
    </source>
</evidence>
<evidence type="ECO:0000250" key="2">
    <source>
        <dbReference type="UniProtKB" id="Q99PN3"/>
    </source>
</evidence>
<evidence type="ECO:0000255" key="3"/>
<evidence type="ECO:0000255" key="4">
    <source>
        <dbReference type="PROSITE-ProRule" id="PRU00024"/>
    </source>
</evidence>
<evidence type="ECO:0000255" key="5">
    <source>
        <dbReference type="PROSITE-ProRule" id="PRU00175"/>
    </source>
</evidence>
<evidence type="ECO:0000255" key="6">
    <source>
        <dbReference type="PROSITE-ProRule" id="PRU00548"/>
    </source>
</evidence>
<evidence type="ECO:0000256" key="7">
    <source>
        <dbReference type="SAM" id="MobiDB-lite"/>
    </source>
</evidence>
<evidence type="ECO:0000305" key="8"/>